<keyword id="KW-0030">Aminoacyl-tRNA synthetase</keyword>
<keyword id="KW-0067">ATP-binding</keyword>
<keyword id="KW-0963">Cytoplasm</keyword>
<keyword id="KW-0436">Ligase</keyword>
<keyword id="KW-0479">Metal-binding</keyword>
<keyword id="KW-0547">Nucleotide-binding</keyword>
<keyword id="KW-0648">Protein biosynthesis</keyword>
<keyword id="KW-0694">RNA-binding</keyword>
<keyword id="KW-0820">tRNA-binding</keyword>
<keyword id="KW-0862">Zinc</keyword>
<feature type="chain" id="PRO_1000098618" description="Threonine--tRNA ligase">
    <location>
        <begin position="1"/>
        <end position="647"/>
    </location>
</feature>
<feature type="domain" description="TGS" evidence="2">
    <location>
        <begin position="1"/>
        <end position="61"/>
    </location>
</feature>
<feature type="region of interest" description="Catalytic" evidence="1">
    <location>
        <begin position="242"/>
        <end position="540"/>
    </location>
</feature>
<feature type="binding site" evidence="1">
    <location>
        <position position="336"/>
    </location>
    <ligand>
        <name>Zn(2+)</name>
        <dbReference type="ChEBI" id="CHEBI:29105"/>
    </ligand>
</feature>
<feature type="binding site" evidence="1">
    <location>
        <position position="387"/>
    </location>
    <ligand>
        <name>Zn(2+)</name>
        <dbReference type="ChEBI" id="CHEBI:29105"/>
    </ligand>
</feature>
<feature type="binding site" evidence="1">
    <location>
        <position position="517"/>
    </location>
    <ligand>
        <name>Zn(2+)</name>
        <dbReference type="ChEBI" id="CHEBI:29105"/>
    </ligand>
</feature>
<accession>B5E6Q8</accession>
<protein>
    <recommendedName>
        <fullName evidence="1">Threonine--tRNA ligase</fullName>
        <ecNumber evidence="1">6.1.1.3</ecNumber>
    </recommendedName>
    <alternativeName>
        <fullName evidence="1">Threonyl-tRNA synthetase</fullName>
        <shortName evidence="1">ThrRS</shortName>
    </alternativeName>
</protein>
<comment type="function">
    <text evidence="1">Catalyzes the attachment of threonine to tRNA(Thr) in a two-step reaction: L-threonine is first activated by ATP to form Thr-AMP and then transferred to the acceptor end of tRNA(Thr). Also edits incorrectly charged L-seryl-tRNA(Thr).</text>
</comment>
<comment type="catalytic activity">
    <reaction evidence="1">
        <text>tRNA(Thr) + L-threonine + ATP = L-threonyl-tRNA(Thr) + AMP + diphosphate + H(+)</text>
        <dbReference type="Rhea" id="RHEA:24624"/>
        <dbReference type="Rhea" id="RHEA-COMP:9670"/>
        <dbReference type="Rhea" id="RHEA-COMP:9704"/>
        <dbReference type="ChEBI" id="CHEBI:15378"/>
        <dbReference type="ChEBI" id="CHEBI:30616"/>
        <dbReference type="ChEBI" id="CHEBI:33019"/>
        <dbReference type="ChEBI" id="CHEBI:57926"/>
        <dbReference type="ChEBI" id="CHEBI:78442"/>
        <dbReference type="ChEBI" id="CHEBI:78534"/>
        <dbReference type="ChEBI" id="CHEBI:456215"/>
        <dbReference type="EC" id="6.1.1.3"/>
    </reaction>
</comment>
<comment type="cofactor">
    <cofactor evidence="1">
        <name>Zn(2+)</name>
        <dbReference type="ChEBI" id="CHEBI:29105"/>
    </cofactor>
    <text evidence="1">Binds 1 zinc ion per subunit.</text>
</comment>
<comment type="subunit">
    <text evidence="1">Homodimer.</text>
</comment>
<comment type="subcellular location">
    <subcellularLocation>
        <location evidence="1">Cytoplasm</location>
    </subcellularLocation>
</comment>
<comment type="similarity">
    <text evidence="1">Belongs to the class-II aminoacyl-tRNA synthetase family.</text>
</comment>
<proteinExistence type="inferred from homology"/>
<gene>
    <name evidence="1" type="primary">thrS</name>
    <name type="ordered locus">SPG_1542</name>
</gene>
<name>SYT_STRP4</name>
<sequence length="647" mass="74697">MINITFPDGAIREFESGVTTFEIAQSISNSLAKKALAGKFNGKLIDTTRAITEDGSIEIVTPDHEDALPILRHSAAHLFAQAARRLFPDIHLGVGPAIEDGFYYDTDNTAGQISNEDLPRIEEEMQKIVKENFPSIREEVTKDEAREIFKNDPYKLELIEEHSEDEGGLTIYRQGEYVDLCRGPHVPSTGRIQIFHLLHVAGAYWRGNSDNAMMQRIYGTAWFDKKDLKNYLQMREEAKERDHRKLGKELDLFMISQEVGQGLPFWLPNGATIRRELERYIVNKELASGYQHVYTPPLASVELYKTSGHWDHYQEDMFPTMDMGDGEEFVLRPMNCPHHIQVFKHHVHSYRELPIRIAEIGMMHRYEKSGALTGLQRVREMSLNDGHLFVTPEQIQEEFQRALQLIIDVYEDFNLTDYRFRLSLRDPQDTHKYFDNDEMWENAQTMLRAALDEMGVDYFEAEGEAAFYGPKLDIQIKTALGKEETLSTIQLDFLLPERFDLKYIGADGEDHRPVMIHRGVISTMERFTAILIENYKGAFPTWLAPHQVTLIPVSNEKHVDYAWEVAKKLRDRGVRADVDERNEKMQFKIRASQTSKIPYQLIVGDKEMEDETVNVRRYGQKETQTVSVDNFVQAILADIANKSRVEK</sequence>
<reference key="1">
    <citation type="journal article" date="2001" name="Microb. Drug Resist.">
        <title>Annotated draft genomic sequence from a Streptococcus pneumoniae type 19F clinical isolate.</title>
        <authorList>
            <person name="Dopazo J."/>
            <person name="Mendoza A."/>
            <person name="Herrero J."/>
            <person name="Caldara F."/>
            <person name="Humbert Y."/>
            <person name="Friedli L."/>
            <person name="Guerrier M."/>
            <person name="Grand-Schenk E."/>
            <person name="Gandin C."/>
            <person name="de Francesco M."/>
            <person name="Polissi A."/>
            <person name="Buell G."/>
            <person name="Feger G."/>
            <person name="Garcia E."/>
            <person name="Peitsch M."/>
            <person name="Garcia-Bustos J.F."/>
        </authorList>
    </citation>
    <scope>NUCLEOTIDE SEQUENCE [LARGE SCALE GENOMIC DNA]</scope>
    <source>
        <strain>G54</strain>
    </source>
</reference>
<reference key="2">
    <citation type="submission" date="2008-03" db="EMBL/GenBank/DDBJ databases">
        <title>Pneumococcal beta glucoside metabolism investigated by whole genome comparison.</title>
        <authorList>
            <person name="Mulas L."/>
            <person name="Trappetti C."/>
            <person name="Hakenbeck R."/>
            <person name="Iannelli F."/>
            <person name="Pozzi G."/>
            <person name="Davidsen T.M."/>
            <person name="Tettelin H."/>
            <person name="Oggioni M."/>
        </authorList>
    </citation>
    <scope>NUCLEOTIDE SEQUENCE [LARGE SCALE GENOMIC DNA]</scope>
    <source>
        <strain>G54</strain>
    </source>
</reference>
<dbReference type="EC" id="6.1.1.3" evidence="1"/>
<dbReference type="EMBL" id="CP001015">
    <property type="protein sequence ID" value="ACF55306.1"/>
    <property type="molecule type" value="Genomic_DNA"/>
</dbReference>
<dbReference type="SMR" id="B5E6Q8"/>
<dbReference type="KEGG" id="spx:SPG_1542"/>
<dbReference type="HOGENOM" id="CLU_008554_3_2_9"/>
<dbReference type="GO" id="GO:0005737">
    <property type="term" value="C:cytoplasm"/>
    <property type="evidence" value="ECO:0007669"/>
    <property type="project" value="UniProtKB-SubCell"/>
</dbReference>
<dbReference type="GO" id="GO:0005524">
    <property type="term" value="F:ATP binding"/>
    <property type="evidence" value="ECO:0007669"/>
    <property type="project" value="UniProtKB-UniRule"/>
</dbReference>
<dbReference type="GO" id="GO:0140096">
    <property type="term" value="F:catalytic activity, acting on a protein"/>
    <property type="evidence" value="ECO:0007669"/>
    <property type="project" value="UniProtKB-ARBA"/>
</dbReference>
<dbReference type="GO" id="GO:0046872">
    <property type="term" value="F:metal ion binding"/>
    <property type="evidence" value="ECO:0007669"/>
    <property type="project" value="UniProtKB-KW"/>
</dbReference>
<dbReference type="GO" id="GO:0004829">
    <property type="term" value="F:threonine-tRNA ligase activity"/>
    <property type="evidence" value="ECO:0007669"/>
    <property type="project" value="UniProtKB-UniRule"/>
</dbReference>
<dbReference type="GO" id="GO:0016740">
    <property type="term" value="F:transferase activity"/>
    <property type="evidence" value="ECO:0007669"/>
    <property type="project" value="UniProtKB-ARBA"/>
</dbReference>
<dbReference type="GO" id="GO:0000049">
    <property type="term" value="F:tRNA binding"/>
    <property type="evidence" value="ECO:0007669"/>
    <property type="project" value="UniProtKB-KW"/>
</dbReference>
<dbReference type="GO" id="GO:0006435">
    <property type="term" value="P:threonyl-tRNA aminoacylation"/>
    <property type="evidence" value="ECO:0007669"/>
    <property type="project" value="UniProtKB-UniRule"/>
</dbReference>
<dbReference type="CDD" id="cd01667">
    <property type="entry name" value="TGS_ThrRS"/>
    <property type="match status" value="1"/>
</dbReference>
<dbReference type="CDD" id="cd00860">
    <property type="entry name" value="ThrRS_anticodon"/>
    <property type="match status" value="1"/>
</dbReference>
<dbReference type="CDD" id="cd00771">
    <property type="entry name" value="ThrRS_core"/>
    <property type="match status" value="1"/>
</dbReference>
<dbReference type="FunFam" id="3.10.20.30:FF:000005">
    <property type="entry name" value="Threonine--tRNA ligase"/>
    <property type="match status" value="1"/>
</dbReference>
<dbReference type="FunFam" id="3.30.54.20:FF:000002">
    <property type="entry name" value="Threonine--tRNA ligase"/>
    <property type="match status" value="1"/>
</dbReference>
<dbReference type="FunFam" id="3.30.930.10:FF:000002">
    <property type="entry name" value="Threonine--tRNA ligase"/>
    <property type="match status" value="1"/>
</dbReference>
<dbReference type="FunFam" id="3.40.50.800:FF:000001">
    <property type="entry name" value="Threonine--tRNA ligase"/>
    <property type="match status" value="1"/>
</dbReference>
<dbReference type="FunFam" id="3.30.980.10:FF:000005">
    <property type="entry name" value="Threonyl-tRNA synthetase, mitochondrial"/>
    <property type="match status" value="1"/>
</dbReference>
<dbReference type="Gene3D" id="3.10.20.30">
    <property type="match status" value="1"/>
</dbReference>
<dbReference type="Gene3D" id="3.30.54.20">
    <property type="match status" value="1"/>
</dbReference>
<dbReference type="Gene3D" id="3.40.50.800">
    <property type="entry name" value="Anticodon-binding domain"/>
    <property type="match status" value="1"/>
</dbReference>
<dbReference type="Gene3D" id="3.30.930.10">
    <property type="entry name" value="Bira Bifunctional Protein, Domain 2"/>
    <property type="match status" value="1"/>
</dbReference>
<dbReference type="Gene3D" id="3.30.980.10">
    <property type="entry name" value="Threonyl-trna Synthetase, Chain A, domain 2"/>
    <property type="match status" value="1"/>
</dbReference>
<dbReference type="HAMAP" id="MF_00184">
    <property type="entry name" value="Thr_tRNA_synth"/>
    <property type="match status" value="1"/>
</dbReference>
<dbReference type="InterPro" id="IPR002314">
    <property type="entry name" value="aa-tRNA-synt_IIb"/>
</dbReference>
<dbReference type="InterPro" id="IPR006195">
    <property type="entry name" value="aa-tRNA-synth_II"/>
</dbReference>
<dbReference type="InterPro" id="IPR045864">
    <property type="entry name" value="aa-tRNA-synth_II/BPL/LPL"/>
</dbReference>
<dbReference type="InterPro" id="IPR004154">
    <property type="entry name" value="Anticodon-bd"/>
</dbReference>
<dbReference type="InterPro" id="IPR036621">
    <property type="entry name" value="Anticodon-bd_dom_sf"/>
</dbReference>
<dbReference type="InterPro" id="IPR012675">
    <property type="entry name" value="Beta-grasp_dom_sf"/>
</dbReference>
<dbReference type="InterPro" id="IPR004095">
    <property type="entry name" value="TGS"/>
</dbReference>
<dbReference type="InterPro" id="IPR012676">
    <property type="entry name" value="TGS-like"/>
</dbReference>
<dbReference type="InterPro" id="IPR002320">
    <property type="entry name" value="Thr-tRNA-ligase_IIa"/>
</dbReference>
<dbReference type="InterPro" id="IPR018163">
    <property type="entry name" value="Thr/Ala-tRNA-synth_IIc_edit"/>
</dbReference>
<dbReference type="InterPro" id="IPR047246">
    <property type="entry name" value="ThrRS_anticodon"/>
</dbReference>
<dbReference type="InterPro" id="IPR033728">
    <property type="entry name" value="ThrRS_core"/>
</dbReference>
<dbReference type="InterPro" id="IPR012947">
    <property type="entry name" value="tRNA_SAD"/>
</dbReference>
<dbReference type="NCBIfam" id="TIGR00418">
    <property type="entry name" value="thrS"/>
    <property type="match status" value="1"/>
</dbReference>
<dbReference type="PANTHER" id="PTHR11451:SF56">
    <property type="entry name" value="THREONINE--TRNA LIGASE 1"/>
    <property type="match status" value="1"/>
</dbReference>
<dbReference type="PANTHER" id="PTHR11451">
    <property type="entry name" value="THREONINE-TRNA LIGASE"/>
    <property type="match status" value="1"/>
</dbReference>
<dbReference type="Pfam" id="PF03129">
    <property type="entry name" value="HGTP_anticodon"/>
    <property type="match status" value="1"/>
</dbReference>
<dbReference type="Pfam" id="PF02824">
    <property type="entry name" value="TGS"/>
    <property type="match status" value="1"/>
</dbReference>
<dbReference type="Pfam" id="PF00587">
    <property type="entry name" value="tRNA-synt_2b"/>
    <property type="match status" value="1"/>
</dbReference>
<dbReference type="Pfam" id="PF07973">
    <property type="entry name" value="tRNA_SAD"/>
    <property type="match status" value="1"/>
</dbReference>
<dbReference type="PRINTS" id="PR01047">
    <property type="entry name" value="TRNASYNTHTHR"/>
</dbReference>
<dbReference type="SMART" id="SM00863">
    <property type="entry name" value="tRNA_SAD"/>
    <property type="match status" value="1"/>
</dbReference>
<dbReference type="SUPFAM" id="SSF52954">
    <property type="entry name" value="Class II aaRS ABD-related"/>
    <property type="match status" value="1"/>
</dbReference>
<dbReference type="SUPFAM" id="SSF55681">
    <property type="entry name" value="Class II aaRS and biotin synthetases"/>
    <property type="match status" value="1"/>
</dbReference>
<dbReference type="SUPFAM" id="SSF81271">
    <property type="entry name" value="TGS-like"/>
    <property type="match status" value="1"/>
</dbReference>
<dbReference type="SUPFAM" id="SSF55186">
    <property type="entry name" value="ThrRS/AlaRS common domain"/>
    <property type="match status" value="1"/>
</dbReference>
<dbReference type="PROSITE" id="PS50862">
    <property type="entry name" value="AA_TRNA_LIGASE_II"/>
    <property type="match status" value="1"/>
</dbReference>
<dbReference type="PROSITE" id="PS51880">
    <property type="entry name" value="TGS"/>
    <property type="match status" value="1"/>
</dbReference>
<organism>
    <name type="scientific">Streptococcus pneumoniae serotype 19F (strain G54)</name>
    <dbReference type="NCBI Taxonomy" id="512566"/>
    <lineage>
        <taxon>Bacteria</taxon>
        <taxon>Bacillati</taxon>
        <taxon>Bacillota</taxon>
        <taxon>Bacilli</taxon>
        <taxon>Lactobacillales</taxon>
        <taxon>Streptococcaceae</taxon>
        <taxon>Streptococcus</taxon>
    </lineage>
</organism>
<evidence type="ECO:0000255" key="1">
    <source>
        <dbReference type="HAMAP-Rule" id="MF_00184"/>
    </source>
</evidence>
<evidence type="ECO:0000255" key="2">
    <source>
        <dbReference type="PROSITE-ProRule" id="PRU01228"/>
    </source>
</evidence>